<dbReference type="RefSeq" id="YP_010377183.1">
    <property type="nucleotide sequence ID" value="NC_063383.1"/>
</dbReference>
<dbReference type="SMR" id="P0DTM7"/>
<dbReference type="GeneID" id="72551471"/>
<dbReference type="GO" id="GO:0016020">
    <property type="term" value="C:membrane"/>
    <property type="evidence" value="ECO:0007669"/>
    <property type="project" value="UniProtKB-KW"/>
</dbReference>
<dbReference type="GO" id="GO:0019031">
    <property type="term" value="C:viral envelope"/>
    <property type="evidence" value="ECO:0007669"/>
    <property type="project" value="UniProtKB-KW"/>
</dbReference>
<dbReference type="GO" id="GO:0055036">
    <property type="term" value="C:virion membrane"/>
    <property type="evidence" value="ECO:0007669"/>
    <property type="project" value="UniProtKB-SubCell"/>
</dbReference>
<dbReference type="GO" id="GO:0046718">
    <property type="term" value="P:symbiont entry into host cell"/>
    <property type="evidence" value="ECO:0007669"/>
    <property type="project" value="UniProtKB-KW"/>
</dbReference>
<organismHost>
    <name type="scientific">Cynomys gunnisoni</name>
    <name type="common">Gunnison's prairie dog</name>
    <name type="synonym">Spermophilus gunnisoni</name>
    <dbReference type="NCBI Taxonomy" id="45479"/>
</organismHost>
<organismHost>
    <name type="scientific">Cynomys leucurus</name>
    <name type="common">White-tailed prairie dog</name>
    <dbReference type="NCBI Taxonomy" id="99825"/>
</organismHost>
<organismHost>
    <name type="scientific">Cynomys ludovicianus</name>
    <name type="common">Black-tailed prairie dog</name>
    <dbReference type="NCBI Taxonomy" id="45480"/>
</organismHost>
<organismHost>
    <name type="scientific">Cynomys mexicanus</name>
    <name type="common">Mexican prairie dog</name>
    <dbReference type="NCBI Taxonomy" id="99826"/>
</organismHost>
<organismHost>
    <name type="scientific">Cynomys parvidens</name>
    <name type="common">Utah prairie dog</name>
    <dbReference type="NCBI Taxonomy" id="99827"/>
</organismHost>
<organismHost>
    <name type="scientific">Gliridae</name>
    <name type="common">dormice</name>
    <dbReference type="NCBI Taxonomy" id="30650"/>
</organismHost>
<organismHost>
    <name type="scientific">Heliosciurus ruwenzorii</name>
    <name type="common">Ruwenzori sun squirrel</name>
    <dbReference type="NCBI Taxonomy" id="226685"/>
</organismHost>
<organismHost>
    <name type="scientific">Homo sapiens</name>
    <name type="common">Human</name>
    <dbReference type="NCBI Taxonomy" id="9606"/>
</organismHost>
<organismHost>
    <name type="scientific">Mus musculus</name>
    <name type="common">Mouse</name>
    <dbReference type="NCBI Taxonomy" id="10090"/>
</organismHost>
<comment type="function">
    <text evidence="1">Component of the entry fusion complex (EFC), which consists of 11 proteins. During cell infection, this complex mediates entry of the virion core into the host cytoplasm by a two-step mechanism consisting of lipid mixing of the viral and cellular membranes and subsequent pore formation.</text>
</comment>
<comment type="subunit">
    <text evidence="1">Component of the entry fusion complex (EFC) composed of OPG053, OPG076, OPG086, OPG094, OPG095, OPG099, OPG107, OPG143, OPG104, OPG147 and OPG155. Except for OPG095 and OPG053, each of the EFC proteins is required for assembly or stability of the complex.</text>
</comment>
<comment type="subcellular location">
    <subcellularLocation>
        <location evidence="1">Virion membrane</location>
        <topology evidence="1">Single-pass membrane protein</topology>
    </subcellularLocation>
    <text evidence="1">Localizes in cytoplasmic virus factories. Component of the membrane of the mature virion.</text>
</comment>
<comment type="induction">
    <text evidence="1">Expressed in the intermediate phase of the viral replicative cycle.</text>
</comment>
<comment type="PTM">
    <text evidence="1">Unglycosylated because produced in viral factories instead of the classic ER -Golgi route.</text>
</comment>
<comment type="similarity">
    <text evidence="3">Belongs to the orthopoxvirus OPG076 family.</text>
</comment>
<reference key="1">
    <citation type="journal article" date="2022" name="J. Infect. Dis.">
        <title>Exportation of Monkeypox virus from the African continent.</title>
        <authorList>
            <person name="Mauldin M.R."/>
            <person name="McCollum A.M."/>
            <person name="Nakazawa Y.J."/>
            <person name="Mandra A."/>
            <person name="Whitehouse E.R."/>
            <person name="Davidson W."/>
            <person name="Zhao H."/>
            <person name="Gao J."/>
            <person name="Li Y."/>
            <person name="Doty J."/>
            <person name="Yinka-Ogunleye A."/>
            <person name="Akinpelu A."/>
            <person name="Aruna O."/>
            <person name="Naidoo D."/>
            <person name="Lewandowski K."/>
            <person name="Afrough B."/>
            <person name="Graham V."/>
            <person name="Aarons E."/>
            <person name="Hewson R."/>
            <person name="Vipond R."/>
            <person name="Dunning J."/>
            <person name="Chand M."/>
            <person name="Brown C."/>
            <person name="Cohen-Gihon I."/>
            <person name="Erez N."/>
            <person name="Shifman O."/>
            <person name="Israeli O."/>
            <person name="Sharon M."/>
            <person name="Schwartz E."/>
            <person name="Beth-Din A."/>
            <person name="Zvi A."/>
            <person name="Mak T.M."/>
            <person name="Ng Y.K."/>
            <person name="Cui L."/>
            <person name="Lin R.T.P."/>
            <person name="Olson V.A."/>
            <person name="Brooks T."/>
            <person name="Paran N."/>
            <person name="Ihekweazu C."/>
            <person name="Reynolds M.G."/>
        </authorList>
    </citation>
    <scope>NUCLEOTIDE SEQUENCE [LARGE SCALE GENOMIC DNA]</scope>
    <source>
        <strain>MPXV-M5312_HM12_Rivers</strain>
    </source>
</reference>
<organism>
    <name type="scientific">Monkeypox virus</name>
    <dbReference type="NCBI Taxonomy" id="10244"/>
    <lineage>
        <taxon>Viruses</taxon>
        <taxon>Varidnaviria</taxon>
        <taxon>Bamfordvirae</taxon>
        <taxon>Nucleocytoviricota</taxon>
        <taxon>Pokkesviricetes</taxon>
        <taxon>Chitovirales</taxon>
        <taxon>Poxviridae</taxon>
        <taxon>Chordopoxvirinae</taxon>
        <taxon>Orthopoxvirus</taxon>
    </lineage>
</organism>
<accession>P0DTM7</accession>
<proteinExistence type="inferred from homology"/>
<keyword id="KW-0472">Membrane</keyword>
<keyword id="KW-0812">Transmembrane</keyword>
<keyword id="KW-1133">Transmembrane helix</keyword>
<keyword id="KW-0261">Viral envelope protein</keyword>
<keyword id="KW-1162">Viral penetration into host cytoplasm</keyword>
<keyword id="KW-0946">Virion</keyword>
<keyword id="KW-1160">Virus entry into host cell</keyword>
<sequence>MLVVIMFFIAFVFCSWLSYSYLCPYISTKELNKSR</sequence>
<protein>
    <recommendedName>
        <fullName>Entry-fusion complex protein OPG076</fullName>
        <shortName>EFC protein OPG076</shortName>
    </recommendedName>
</protein>
<evidence type="ECO:0000250" key="1">
    <source>
        <dbReference type="UniProtKB" id="P0CK21"/>
    </source>
</evidence>
<evidence type="ECO:0000255" key="2"/>
<evidence type="ECO:0000305" key="3"/>
<feature type="chain" id="PRO_0000457643" description="Entry-fusion complex protein OPG076">
    <location>
        <begin position="1"/>
        <end position="35"/>
    </location>
</feature>
<feature type="transmembrane region" description="Helical" evidence="2">
    <location>
        <begin position="2"/>
        <end position="22"/>
    </location>
</feature>
<feature type="topological domain" description="Virion surface" evidence="2">
    <location>
        <begin position="23"/>
        <end position="35"/>
    </location>
</feature>
<name>PG076_MONPV</name>
<gene>
    <name type="primary">OPG076</name>
</gene>